<reference key="1">
    <citation type="journal article" date="1996" name="Microbiology">
        <title>Sequence analysis of the Bacillus subtilis chromosome region between the serA and kdg loci cloned in a yeast artificial chromosome.</title>
        <authorList>
            <person name="Sorokin A.V."/>
            <person name="Azevedo V."/>
            <person name="Zumstein E."/>
            <person name="Galleron N."/>
            <person name="Ehrlich S.D."/>
            <person name="Serror P."/>
        </authorList>
    </citation>
    <scope>NUCLEOTIDE SEQUENCE [GENOMIC DNA]</scope>
    <source>
        <strain>168 / Marburg / ATCC 6051 / DSM 10 / JCM 1465 / NBRC 13719 / NCIMB 3610 / NRRL NRS-744 / VKM B-501</strain>
    </source>
</reference>
<reference key="2">
    <citation type="journal article" date="1997" name="Nature">
        <title>The complete genome sequence of the Gram-positive bacterium Bacillus subtilis.</title>
        <authorList>
            <person name="Kunst F."/>
            <person name="Ogasawara N."/>
            <person name="Moszer I."/>
            <person name="Albertini A.M."/>
            <person name="Alloni G."/>
            <person name="Azevedo V."/>
            <person name="Bertero M.G."/>
            <person name="Bessieres P."/>
            <person name="Bolotin A."/>
            <person name="Borchert S."/>
            <person name="Borriss R."/>
            <person name="Boursier L."/>
            <person name="Brans A."/>
            <person name="Braun M."/>
            <person name="Brignell S.C."/>
            <person name="Bron S."/>
            <person name="Brouillet S."/>
            <person name="Bruschi C.V."/>
            <person name="Caldwell B."/>
            <person name="Capuano V."/>
            <person name="Carter N.M."/>
            <person name="Choi S.-K."/>
            <person name="Codani J.-J."/>
            <person name="Connerton I.F."/>
            <person name="Cummings N.J."/>
            <person name="Daniel R.A."/>
            <person name="Denizot F."/>
            <person name="Devine K.M."/>
            <person name="Duesterhoeft A."/>
            <person name="Ehrlich S.D."/>
            <person name="Emmerson P.T."/>
            <person name="Entian K.-D."/>
            <person name="Errington J."/>
            <person name="Fabret C."/>
            <person name="Ferrari E."/>
            <person name="Foulger D."/>
            <person name="Fritz C."/>
            <person name="Fujita M."/>
            <person name="Fujita Y."/>
            <person name="Fuma S."/>
            <person name="Galizzi A."/>
            <person name="Galleron N."/>
            <person name="Ghim S.-Y."/>
            <person name="Glaser P."/>
            <person name="Goffeau A."/>
            <person name="Golightly E.J."/>
            <person name="Grandi G."/>
            <person name="Guiseppi G."/>
            <person name="Guy B.J."/>
            <person name="Haga K."/>
            <person name="Haiech J."/>
            <person name="Harwood C.R."/>
            <person name="Henaut A."/>
            <person name="Hilbert H."/>
            <person name="Holsappel S."/>
            <person name="Hosono S."/>
            <person name="Hullo M.-F."/>
            <person name="Itaya M."/>
            <person name="Jones L.-M."/>
            <person name="Joris B."/>
            <person name="Karamata D."/>
            <person name="Kasahara Y."/>
            <person name="Klaerr-Blanchard M."/>
            <person name="Klein C."/>
            <person name="Kobayashi Y."/>
            <person name="Koetter P."/>
            <person name="Koningstein G."/>
            <person name="Krogh S."/>
            <person name="Kumano M."/>
            <person name="Kurita K."/>
            <person name="Lapidus A."/>
            <person name="Lardinois S."/>
            <person name="Lauber J."/>
            <person name="Lazarevic V."/>
            <person name="Lee S.-M."/>
            <person name="Levine A."/>
            <person name="Liu H."/>
            <person name="Masuda S."/>
            <person name="Mauel C."/>
            <person name="Medigue C."/>
            <person name="Medina N."/>
            <person name="Mellado R.P."/>
            <person name="Mizuno M."/>
            <person name="Moestl D."/>
            <person name="Nakai S."/>
            <person name="Noback M."/>
            <person name="Noone D."/>
            <person name="O'Reilly M."/>
            <person name="Ogawa K."/>
            <person name="Ogiwara A."/>
            <person name="Oudega B."/>
            <person name="Park S.-H."/>
            <person name="Parro V."/>
            <person name="Pohl T.M."/>
            <person name="Portetelle D."/>
            <person name="Porwollik S."/>
            <person name="Prescott A.M."/>
            <person name="Presecan E."/>
            <person name="Pujic P."/>
            <person name="Purnelle B."/>
            <person name="Rapoport G."/>
            <person name="Rey M."/>
            <person name="Reynolds S."/>
            <person name="Rieger M."/>
            <person name="Rivolta C."/>
            <person name="Rocha E."/>
            <person name="Roche B."/>
            <person name="Rose M."/>
            <person name="Sadaie Y."/>
            <person name="Sato T."/>
            <person name="Scanlan E."/>
            <person name="Schleich S."/>
            <person name="Schroeter R."/>
            <person name="Scoffone F."/>
            <person name="Sekiguchi J."/>
            <person name="Sekowska A."/>
            <person name="Seror S.J."/>
            <person name="Serror P."/>
            <person name="Shin B.-S."/>
            <person name="Soldo B."/>
            <person name="Sorokin A."/>
            <person name="Tacconi E."/>
            <person name="Takagi T."/>
            <person name="Takahashi H."/>
            <person name="Takemaru K."/>
            <person name="Takeuchi M."/>
            <person name="Tamakoshi A."/>
            <person name="Tanaka T."/>
            <person name="Terpstra P."/>
            <person name="Tognoni A."/>
            <person name="Tosato V."/>
            <person name="Uchiyama S."/>
            <person name="Vandenbol M."/>
            <person name="Vannier F."/>
            <person name="Vassarotti A."/>
            <person name="Viari A."/>
            <person name="Wambutt R."/>
            <person name="Wedler E."/>
            <person name="Wedler H."/>
            <person name="Weitzenegger T."/>
            <person name="Winters P."/>
            <person name="Wipat A."/>
            <person name="Yamamoto H."/>
            <person name="Yamane K."/>
            <person name="Yasumoto K."/>
            <person name="Yata K."/>
            <person name="Yoshida K."/>
            <person name="Yoshikawa H.-F."/>
            <person name="Zumstein E."/>
            <person name="Yoshikawa H."/>
            <person name="Danchin A."/>
        </authorList>
    </citation>
    <scope>NUCLEOTIDE SEQUENCE [LARGE SCALE GENOMIC DNA]</scope>
    <source>
        <strain>168</strain>
    </source>
</reference>
<reference key="3">
    <citation type="journal article" date="2010" name="PLoS Genet.">
        <title>The C-terminal domain of the bacterial SSB protein acts as a DNA maintenance hub at active chromosome replication forks.</title>
        <authorList>
            <person name="Costes A."/>
            <person name="Lecointe F."/>
            <person name="McGovern S."/>
            <person name="Quevillon-Cheruel S."/>
            <person name="Polard P."/>
        </authorList>
    </citation>
    <scope>SUBCELLULAR LOCATION</scope>
    <source>
        <strain>168</strain>
    </source>
</reference>
<reference key="4">
    <citation type="journal article" date="2017" name="DNA Repair">
        <title>Interplay between Bacillus subtilis RecD2 and the RecG or RuvAB helicase in recombinational repair.</title>
        <authorList>
            <person name="Torres R."/>
            <person name="Romero H."/>
            <person name="Rodriguez-Cerrato V."/>
            <person name="Alonso J.C."/>
        </authorList>
    </citation>
    <scope>DISRUPTION PHENOTYPE</scope>
    <source>
        <strain>168 / YB886 / BG214</strain>
    </source>
</reference>
<gene>
    <name evidence="1" type="primary">dinG</name>
    <name type="ordered locus">BSU22400</name>
</gene>
<accession>P54394</accession>
<organism>
    <name type="scientific">Bacillus subtilis (strain 168)</name>
    <dbReference type="NCBI Taxonomy" id="224308"/>
    <lineage>
        <taxon>Bacteria</taxon>
        <taxon>Bacillati</taxon>
        <taxon>Bacillota</taxon>
        <taxon>Bacilli</taxon>
        <taxon>Bacillales</taxon>
        <taxon>Bacillaceae</taxon>
        <taxon>Bacillus</taxon>
    </lineage>
</organism>
<dbReference type="EC" id="3.1.-.-" evidence="1"/>
<dbReference type="EMBL" id="L47709">
    <property type="protein sequence ID" value="AAB38451.1"/>
    <property type="molecule type" value="Genomic_DNA"/>
</dbReference>
<dbReference type="EMBL" id="AL009126">
    <property type="protein sequence ID" value="CAB14156.1"/>
    <property type="molecule type" value="Genomic_DNA"/>
</dbReference>
<dbReference type="PIR" id="G69615">
    <property type="entry name" value="G69615"/>
</dbReference>
<dbReference type="RefSeq" id="NP_390121.1">
    <property type="nucleotide sequence ID" value="NC_000964.3"/>
</dbReference>
<dbReference type="RefSeq" id="WP_004398920.1">
    <property type="nucleotide sequence ID" value="NZ_OZ025638.1"/>
</dbReference>
<dbReference type="SMR" id="P54394"/>
<dbReference type="FunCoup" id="P54394">
    <property type="interactions" value="256"/>
</dbReference>
<dbReference type="IntAct" id="P54394">
    <property type="interactions" value="2"/>
</dbReference>
<dbReference type="STRING" id="224308.BSU22400"/>
<dbReference type="PaxDb" id="224308-BSU22400"/>
<dbReference type="EnsemblBacteria" id="CAB14156">
    <property type="protein sequence ID" value="CAB14156"/>
    <property type="gene ID" value="BSU_22400"/>
</dbReference>
<dbReference type="GeneID" id="939031"/>
<dbReference type="KEGG" id="bsu:BSU22400"/>
<dbReference type="PATRIC" id="fig|224308.179.peg.2444"/>
<dbReference type="eggNOG" id="COG0847">
    <property type="taxonomic scope" value="Bacteria"/>
</dbReference>
<dbReference type="eggNOG" id="COG1199">
    <property type="taxonomic scope" value="Bacteria"/>
</dbReference>
<dbReference type="InParanoid" id="P54394"/>
<dbReference type="OrthoDB" id="9803913at2"/>
<dbReference type="PhylomeDB" id="P54394"/>
<dbReference type="BioCyc" id="BSUB:BSU22400-MONOMER"/>
<dbReference type="Proteomes" id="UP000001570">
    <property type="component" value="Chromosome"/>
</dbReference>
<dbReference type="GO" id="GO:0005737">
    <property type="term" value="C:cytoplasm"/>
    <property type="evidence" value="ECO:0007669"/>
    <property type="project" value="UniProtKB-SubCell"/>
</dbReference>
<dbReference type="GO" id="GO:0008408">
    <property type="term" value="F:3'-5' exonuclease activity"/>
    <property type="evidence" value="ECO:0007669"/>
    <property type="project" value="UniProtKB-UniRule"/>
</dbReference>
<dbReference type="GO" id="GO:0005524">
    <property type="term" value="F:ATP binding"/>
    <property type="evidence" value="ECO:0007669"/>
    <property type="project" value="UniProtKB-UniRule"/>
</dbReference>
<dbReference type="GO" id="GO:0003677">
    <property type="term" value="F:DNA binding"/>
    <property type="evidence" value="ECO:0007669"/>
    <property type="project" value="InterPro"/>
</dbReference>
<dbReference type="GO" id="GO:0003678">
    <property type="term" value="F:DNA helicase activity"/>
    <property type="evidence" value="ECO:0000318"/>
    <property type="project" value="GO_Central"/>
</dbReference>
<dbReference type="GO" id="GO:0003887">
    <property type="term" value="F:DNA-directed DNA polymerase activity"/>
    <property type="evidence" value="ECO:0007669"/>
    <property type="project" value="InterPro"/>
</dbReference>
<dbReference type="GO" id="GO:0016818">
    <property type="term" value="F:hydrolase activity, acting on acid anhydrides, in phosphorus-containing anhydrides"/>
    <property type="evidence" value="ECO:0007669"/>
    <property type="project" value="InterPro"/>
</dbReference>
<dbReference type="GO" id="GO:0006260">
    <property type="term" value="P:DNA replication"/>
    <property type="evidence" value="ECO:0007669"/>
    <property type="project" value="InterPro"/>
</dbReference>
<dbReference type="CDD" id="cd06127">
    <property type="entry name" value="DEDDh"/>
    <property type="match status" value="1"/>
</dbReference>
<dbReference type="FunFam" id="3.30.420.10:FF:000045">
    <property type="entry name" value="3'-5' exonuclease DinG"/>
    <property type="match status" value="1"/>
</dbReference>
<dbReference type="FunFam" id="3.40.50.300:FF:000437">
    <property type="entry name" value="ATP-dependent DNA helicase DinG"/>
    <property type="match status" value="1"/>
</dbReference>
<dbReference type="Gene3D" id="3.40.50.300">
    <property type="entry name" value="P-loop containing nucleotide triphosphate hydrolases"/>
    <property type="match status" value="2"/>
</dbReference>
<dbReference type="Gene3D" id="3.30.420.10">
    <property type="entry name" value="Ribonuclease H-like superfamily/Ribonuclease H"/>
    <property type="match status" value="1"/>
</dbReference>
<dbReference type="HAMAP" id="MF_02206">
    <property type="entry name" value="DinG_exonucl"/>
    <property type="match status" value="1"/>
</dbReference>
<dbReference type="InterPro" id="IPR006555">
    <property type="entry name" value="ATP-dep_Helicase_C"/>
</dbReference>
<dbReference type="InterPro" id="IPR006310">
    <property type="entry name" value="DinG"/>
</dbReference>
<dbReference type="InterPro" id="IPR045028">
    <property type="entry name" value="DinG/Rad3-like"/>
</dbReference>
<dbReference type="InterPro" id="IPR006054">
    <property type="entry name" value="DnaQ"/>
</dbReference>
<dbReference type="InterPro" id="IPR013520">
    <property type="entry name" value="Exonuclease_RNaseT/DNA_pol3"/>
</dbReference>
<dbReference type="InterPro" id="IPR014013">
    <property type="entry name" value="Helic_SF1/SF2_ATP-bd_DinG/Rad3"/>
</dbReference>
<dbReference type="InterPro" id="IPR014001">
    <property type="entry name" value="Helicase_ATP-bd"/>
</dbReference>
<dbReference type="InterPro" id="IPR027417">
    <property type="entry name" value="P-loop_NTPase"/>
</dbReference>
<dbReference type="InterPro" id="IPR012337">
    <property type="entry name" value="RNaseH-like_sf"/>
</dbReference>
<dbReference type="InterPro" id="IPR036397">
    <property type="entry name" value="RNaseH_sf"/>
</dbReference>
<dbReference type="NCBIfam" id="TIGR01407">
    <property type="entry name" value="dinG_rel"/>
    <property type="match status" value="1"/>
</dbReference>
<dbReference type="NCBIfam" id="TIGR00573">
    <property type="entry name" value="dnaq"/>
    <property type="match status" value="1"/>
</dbReference>
<dbReference type="NCBIfam" id="NF005981">
    <property type="entry name" value="PRK08074.1"/>
    <property type="match status" value="1"/>
</dbReference>
<dbReference type="PANTHER" id="PTHR11472">
    <property type="entry name" value="DNA REPAIR DEAD HELICASE RAD3/XP-D SUBFAMILY MEMBER"/>
    <property type="match status" value="1"/>
</dbReference>
<dbReference type="PANTHER" id="PTHR11472:SF34">
    <property type="entry name" value="REGULATOR OF TELOMERE ELONGATION HELICASE 1"/>
    <property type="match status" value="1"/>
</dbReference>
<dbReference type="Pfam" id="PF13307">
    <property type="entry name" value="Helicase_C_2"/>
    <property type="match status" value="1"/>
</dbReference>
<dbReference type="Pfam" id="PF00929">
    <property type="entry name" value="RNase_T"/>
    <property type="match status" value="1"/>
</dbReference>
<dbReference type="SMART" id="SM00487">
    <property type="entry name" value="DEXDc"/>
    <property type="match status" value="1"/>
</dbReference>
<dbReference type="SMART" id="SM00479">
    <property type="entry name" value="EXOIII"/>
    <property type="match status" value="1"/>
</dbReference>
<dbReference type="SMART" id="SM00491">
    <property type="entry name" value="HELICc2"/>
    <property type="match status" value="1"/>
</dbReference>
<dbReference type="SUPFAM" id="SSF52540">
    <property type="entry name" value="P-loop containing nucleoside triphosphate hydrolases"/>
    <property type="match status" value="1"/>
</dbReference>
<dbReference type="SUPFAM" id="SSF53098">
    <property type="entry name" value="Ribonuclease H-like"/>
    <property type="match status" value="1"/>
</dbReference>
<dbReference type="PROSITE" id="PS51193">
    <property type="entry name" value="HELICASE_ATP_BIND_2"/>
    <property type="match status" value="1"/>
</dbReference>
<dbReference type="PROSITE" id="PS51194">
    <property type="entry name" value="HELICASE_CTER"/>
    <property type="match status" value="1"/>
</dbReference>
<keyword id="KW-0067">ATP-binding</keyword>
<keyword id="KW-0963">Cytoplasm</keyword>
<keyword id="KW-0269">Exonuclease</keyword>
<keyword id="KW-0378">Hydrolase</keyword>
<keyword id="KW-0540">Nuclease</keyword>
<keyword id="KW-0547">Nucleotide-binding</keyword>
<keyword id="KW-1185">Reference proteome</keyword>
<sequence>MNKQRFVVIDVETTGNSPKKGDKIIQIAAVVIENGQITERFSKYINPNKSIPAFIEQLTGISNQMVENEQPFEAVAEEVFQLLDGAYFVAHNIHFDLGFVKYELHKAGFQLPDCEVLDTVELSRIVFPGFEGYKLTELSEELQLRHDQPHRADSDAEVTGLIFLEILEKLRQLPYPTLKQLRRLSQHFISDLTHLLDMFINENRHTEIPGYTRFSSFSVREPEAIDVRINEDENFSFEIESWEAGNEKALSELMPGYEKRDGQMMMMREVADAFANREHALIEAPPGIGKTIGYLIPAALFAKKSKKPVIISTYSTLLQQQILTKDLPIVQDLFPFPVTAAILKGQSHYLCLYKFEQVLHEEDDNYDAVLTKAQLLVWLTETNTGDVAELNLPSGGKLLWDRLAYDDDSYKRSRSEHVIGFYERAKQIAMRSDLVITNHSLLLTDEGSHKKRLPESGTFIIDEAHHFERAASEHLGKRATYIELHTKLSRIGTLKEQGLLKKMRQLFQRNSLPVDSFFELEEWLQHVQAESDAFFSSVHSFVKRRKPKEDLNRLVFKVNKESQDKSWSILTDGAERLCSMLTHLQQLFEAQSSLMEKHLKGMKSKTVFLADEYQRSMKGLQHYCQTLQKLFFGSDDDEAVWIEIDAKGAKNAVAIYAQPLEPGELLADQFFARKNSVVLTSATLTVEGSFQFMIERLGLSDFFPRTMRIESPFSYDERMQVMIPKEMKSIQDTGQPEFIQDTARYIELMAKEKQPKILVLFTSHDMLKKVHQELKHNMSASGIQLLAQGITGGSPGKLMKTFKTSNQAILLGTNHFWEGVDFPGDELTTVMIVRLPFRSPDHPLHAAKCELARKKGKNPFQTVSLPEAVLTFRQGIGRLLRSAGDKGTIIILDRRIKTAGYGRLFLDALPTTSVSEMTDSELEAYVAGEKE</sequence>
<proteinExistence type="inferred from homology"/>
<comment type="function">
    <text evidence="1">3'-5' exonuclease.</text>
</comment>
<comment type="subcellular location">
    <subcellularLocation>
        <location evidence="2">Cytoplasm</location>
    </subcellularLocation>
</comment>
<comment type="disruption phenotype">
    <text evidence="3">Cells are marginally sensitive to methyl methanesulfonate (MMS) and sensitive to H2O2 (PubMed:28527403).</text>
</comment>
<comment type="similarity">
    <text evidence="1">Belongs to the helicase family. DinG subfamily. Type 2 sub-subfamily.</text>
</comment>
<feature type="chain" id="PRO_0000101995" description="3'-5' exonuclease DinG">
    <location>
        <begin position="1"/>
        <end position="931"/>
    </location>
</feature>
<feature type="domain" description="Exonuclease" evidence="1">
    <location>
        <begin position="7"/>
        <end position="162"/>
    </location>
</feature>
<feature type="domain" description="Helicase ATP-binding" evidence="1">
    <location>
        <begin position="250"/>
        <end position="510"/>
    </location>
</feature>
<feature type="domain" description="Helicase C-terminal" evidence="1">
    <location>
        <begin position="741"/>
        <end position="897"/>
    </location>
</feature>
<feature type="short sequence motif" description="DEAH box" evidence="1">
    <location>
        <begin position="462"/>
        <end position="465"/>
    </location>
</feature>
<feature type="binding site" evidence="1">
    <location>
        <begin position="284"/>
        <end position="291"/>
    </location>
    <ligand>
        <name>ATP</name>
        <dbReference type="ChEBI" id="CHEBI:30616"/>
    </ligand>
</feature>
<protein>
    <recommendedName>
        <fullName evidence="1">3'-5' exonuclease DinG</fullName>
        <ecNumber evidence="1">3.1.-.-</ecNumber>
    </recommendedName>
</protein>
<name>DING_BACSU</name>
<evidence type="ECO:0000255" key="1">
    <source>
        <dbReference type="HAMAP-Rule" id="MF_02206"/>
    </source>
</evidence>
<evidence type="ECO:0000269" key="2">
    <source>
    </source>
</evidence>
<evidence type="ECO:0000269" key="3">
    <source>
    </source>
</evidence>